<reference key="1">
    <citation type="journal article" date="1992" name="Infect. Immun.">
        <title>Evaluation of genetic divergence among Borrelia burgdorferi isolates by use of OspA, fla, HSP60, and HSP70 gene probes.</title>
        <authorList>
            <person name="Wallich R."/>
            <person name="Helmes C."/>
            <person name="Schaible U.E."/>
            <person name="Lobet Y."/>
            <person name="Moter S.E."/>
            <person name="Kramer M.D."/>
            <person name="Simon M.M."/>
        </authorList>
    </citation>
    <scope>NUCLEOTIDE SEQUENCE [GENOMIC DNA]</scope>
</reference>
<reference key="2">
    <citation type="journal article" date="2011" name="J. Bacteriol.">
        <title>Whole-genome sequences of thirteen isolates of Borrelia burgdorferi.</title>
        <authorList>
            <person name="Schutzer S.E."/>
            <person name="Fraser-Liggett C.M."/>
            <person name="Casjens S.R."/>
            <person name="Qiu W.G."/>
            <person name="Dunn J.J."/>
            <person name="Mongodin E.F."/>
            <person name="Luft B.J."/>
        </authorList>
    </citation>
    <scope>NUCLEOTIDE SEQUENCE [LARGE SCALE GENOMIC DNA]</scope>
    <source>
        <strain>ZS7</strain>
    </source>
</reference>
<gene>
    <name evidence="1" type="primary">dnaK</name>
    <name type="ordered locus">BbuZS7_0528</name>
</gene>
<organism>
    <name type="scientific">Borreliella burgdorferi (strain ZS7)</name>
    <name type="common">Borrelia burgdorferi</name>
    <dbReference type="NCBI Taxonomy" id="445985"/>
    <lineage>
        <taxon>Bacteria</taxon>
        <taxon>Pseudomonadati</taxon>
        <taxon>Spirochaetota</taxon>
        <taxon>Spirochaetia</taxon>
        <taxon>Spirochaetales</taxon>
        <taxon>Borreliaceae</taxon>
        <taxon>Borreliella</taxon>
    </lineage>
</organism>
<protein>
    <recommendedName>
        <fullName evidence="1">Chaperone protein DnaK</fullName>
    </recommendedName>
    <alternativeName>
        <fullName evidence="1">HSP70</fullName>
    </alternativeName>
    <alternativeName>
        <fullName evidence="1">Heat shock 70 kDa protein</fullName>
    </alternativeName>
    <alternativeName>
        <fullName evidence="1">Heat shock protein 70</fullName>
    </alternativeName>
</protein>
<name>DNAK_BORBZ</name>
<keyword id="KW-0067">ATP-binding</keyword>
<keyword id="KW-0143">Chaperone</keyword>
<keyword id="KW-0547">Nucleotide-binding</keyword>
<keyword id="KW-0597">Phosphoprotein</keyword>
<keyword id="KW-0346">Stress response</keyword>
<proteinExistence type="evidence at transcript level"/>
<evidence type="ECO:0000255" key="1">
    <source>
        <dbReference type="HAMAP-Rule" id="MF_00332"/>
    </source>
</evidence>
<evidence type="ECO:0000256" key="2">
    <source>
        <dbReference type="SAM" id="MobiDB-lite"/>
    </source>
</evidence>
<comment type="function">
    <text evidence="1">Acts as a chaperone.</text>
</comment>
<comment type="induction">
    <text>By heat shock.</text>
</comment>
<comment type="similarity">
    <text evidence="1">Belongs to the heat shock protein 70 family.</text>
</comment>
<sequence length="635" mass="69276">MGKIIGIDLGTTNSCVAIMEHGKPVVIQNSEGGRTTPSIVAYTNKGERLVGQVAKNQMVTNPENTIYSIKRFMGRRFEEVASEIKMVPYKIEKGLNGDARVNISNIKKQMSPPEISAATLTKMKETAEAYLGEKVTEAVITVPAYFNDAQRQATKDAGKIAGLEVKRIVNEPTAAALAYGIEKKHEEIVAVYDLGGGTFDISILELGDGVFEVKSTNGDTHLGGDNFDDEIIKHLISEFKKESAIDLSNDKMALQRLKEAAEKAKIELSGAQEASINLPFITADANGPKHLQYTLTRAKFEQMVDHLVQKTKEPCLKAIKDAGLKASDINEVILVGGSTRIPAIQKIVKDIFGQDPNKGVNPDEAVAIGAAIQGGILTGETKDMVLLDVTPLSLGIETLGGVMTKLIERNTTIPTKKSQVFSTAADNQTSVDIKVLQGEREMAAQNRILGNFILDGIPAAPRGVPQIEVSFDIDANGIVHVSAKDMGTGKEQKIRIESSSGLSESEIDRMVKDAEAHAEEDKKLKENIEAKNTANSLIYQTEKSLKEYSEKISSEDKEAIESKIKELKESLEKEDISLIKSRTEELQKASYKIAEMMYKDSSQQNANSQQENGPQSNTSEEGKEADYEVVDEDKK</sequence>
<accession>B7J282</accession>
<accession>P28608</accession>
<dbReference type="EMBL" id="X67646">
    <property type="protein sequence ID" value="CAA47888.1"/>
    <property type="molecule type" value="Genomic_DNA"/>
</dbReference>
<dbReference type="EMBL" id="CP001205">
    <property type="protein sequence ID" value="ACK75037.1"/>
    <property type="molecule type" value="Genomic_DNA"/>
</dbReference>
<dbReference type="PIR" id="E70164">
    <property type="entry name" value="E70164"/>
</dbReference>
<dbReference type="RefSeq" id="WP_002557108.1">
    <property type="nucleotide sequence ID" value="NC_011728.1"/>
</dbReference>
<dbReference type="SMR" id="B7J282"/>
<dbReference type="GeneID" id="56567952"/>
<dbReference type="KEGG" id="bbz:BbuZS7_0528"/>
<dbReference type="HOGENOM" id="CLU_005965_2_4_12"/>
<dbReference type="Proteomes" id="UP000006901">
    <property type="component" value="Chromosome"/>
</dbReference>
<dbReference type="GO" id="GO:0005524">
    <property type="term" value="F:ATP binding"/>
    <property type="evidence" value="ECO:0007669"/>
    <property type="project" value="UniProtKB-UniRule"/>
</dbReference>
<dbReference type="GO" id="GO:0140662">
    <property type="term" value="F:ATP-dependent protein folding chaperone"/>
    <property type="evidence" value="ECO:0007669"/>
    <property type="project" value="InterPro"/>
</dbReference>
<dbReference type="GO" id="GO:0051082">
    <property type="term" value="F:unfolded protein binding"/>
    <property type="evidence" value="ECO:0007669"/>
    <property type="project" value="InterPro"/>
</dbReference>
<dbReference type="CDD" id="cd10234">
    <property type="entry name" value="ASKHA_NBD_HSP70_DnaK-like"/>
    <property type="match status" value="1"/>
</dbReference>
<dbReference type="FunFam" id="2.60.34.10:FF:000014">
    <property type="entry name" value="Chaperone protein DnaK HSP70"/>
    <property type="match status" value="1"/>
</dbReference>
<dbReference type="FunFam" id="3.30.420.40:FF:000020">
    <property type="entry name" value="Chaperone protein HscA homolog"/>
    <property type="match status" value="1"/>
</dbReference>
<dbReference type="FunFam" id="1.20.1270.10:FF:000001">
    <property type="entry name" value="Molecular chaperone DnaK"/>
    <property type="match status" value="1"/>
</dbReference>
<dbReference type="FunFam" id="3.30.420.40:FF:000004">
    <property type="entry name" value="Molecular chaperone DnaK"/>
    <property type="match status" value="1"/>
</dbReference>
<dbReference type="FunFam" id="3.90.640.10:FF:000003">
    <property type="entry name" value="Molecular chaperone DnaK"/>
    <property type="match status" value="1"/>
</dbReference>
<dbReference type="Gene3D" id="1.20.1270.10">
    <property type="match status" value="1"/>
</dbReference>
<dbReference type="Gene3D" id="3.30.420.40">
    <property type="match status" value="2"/>
</dbReference>
<dbReference type="Gene3D" id="3.90.640.10">
    <property type="entry name" value="Actin, Chain A, domain 4"/>
    <property type="match status" value="1"/>
</dbReference>
<dbReference type="Gene3D" id="2.60.34.10">
    <property type="entry name" value="Substrate Binding Domain Of DNAk, Chain A, domain 1"/>
    <property type="match status" value="1"/>
</dbReference>
<dbReference type="HAMAP" id="MF_00332">
    <property type="entry name" value="DnaK"/>
    <property type="match status" value="1"/>
</dbReference>
<dbReference type="InterPro" id="IPR043129">
    <property type="entry name" value="ATPase_NBD"/>
</dbReference>
<dbReference type="InterPro" id="IPR012725">
    <property type="entry name" value="Chaperone_DnaK"/>
</dbReference>
<dbReference type="InterPro" id="IPR018181">
    <property type="entry name" value="Heat_shock_70_CS"/>
</dbReference>
<dbReference type="InterPro" id="IPR029048">
    <property type="entry name" value="HSP70_C_sf"/>
</dbReference>
<dbReference type="InterPro" id="IPR029047">
    <property type="entry name" value="HSP70_peptide-bd_sf"/>
</dbReference>
<dbReference type="InterPro" id="IPR013126">
    <property type="entry name" value="Hsp_70_fam"/>
</dbReference>
<dbReference type="NCBIfam" id="NF001413">
    <property type="entry name" value="PRK00290.1"/>
    <property type="match status" value="1"/>
</dbReference>
<dbReference type="NCBIfam" id="NF003520">
    <property type="entry name" value="PRK05183.1"/>
    <property type="match status" value="1"/>
</dbReference>
<dbReference type="NCBIfam" id="TIGR02350">
    <property type="entry name" value="prok_dnaK"/>
    <property type="match status" value="1"/>
</dbReference>
<dbReference type="PANTHER" id="PTHR19375">
    <property type="entry name" value="HEAT SHOCK PROTEIN 70KDA"/>
    <property type="match status" value="1"/>
</dbReference>
<dbReference type="Pfam" id="PF00012">
    <property type="entry name" value="HSP70"/>
    <property type="match status" value="1"/>
</dbReference>
<dbReference type="PRINTS" id="PR00301">
    <property type="entry name" value="HEATSHOCK70"/>
</dbReference>
<dbReference type="SUPFAM" id="SSF53067">
    <property type="entry name" value="Actin-like ATPase domain"/>
    <property type="match status" value="2"/>
</dbReference>
<dbReference type="SUPFAM" id="SSF100934">
    <property type="entry name" value="Heat shock protein 70kD (HSP70), C-terminal subdomain"/>
    <property type="match status" value="1"/>
</dbReference>
<dbReference type="SUPFAM" id="SSF100920">
    <property type="entry name" value="Heat shock protein 70kD (HSP70), peptide-binding domain"/>
    <property type="match status" value="1"/>
</dbReference>
<dbReference type="PROSITE" id="PS00297">
    <property type="entry name" value="HSP70_1"/>
    <property type="match status" value="1"/>
</dbReference>
<dbReference type="PROSITE" id="PS00329">
    <property type="entry name" value="HSP70_2"/>
    <property type="match status" value="1"/>
</dbReference>
<dbReference type="PROSITE" id="PS01036">
    <property type="entry name" value="HSP70_3"/>
    <property type="match status" value="1"/>
</dbReference>
<feature type="chain" id="PRO_1000119672" description="Chaperone protein DnaK">
    <location>
        <begin position="1"/>
        <end position="635"/>
    </location>
</feature>
<feature type="region of interest" description="Disordered" evidence="2">
    <location>
        <begin position="597"/>
        <end position="635"/>
    </location>
</feature>
<feature type="compositionally biased region" description="Low complexity" evidence="2">
    <location>
        <begin position="601"/>
        <end position="612"/>
    </location>
</feature>
<feature type="compositionally biased region" description="Basic and acidic residues" evidence="2">
    <location>
        <begin position="620"/>
        <end position="635"/>
    </location>
</feature>
<feature type="modified residue" description="Phosphothreonine; by autocatalysis" evidence="1">
    <location>
        <position position="198"/>
    </location>
</feature>